<name>MURQ_HAEIN</name>
<comment type="function">
    <text evidence="1">Specifically catalyzes the cleavage of the D-lactyl ether substituent of MurNAc 6-phosphate, producing GlcNAc 6-phosphate and D-lactate. Together with AnmK, is also required for the utilization of anhydro-N-acetylmuramic acid (anhMurNAc) either imported from the medium or derived from its own cell wall murein, and thus plays a role in cell wall recycling (By similarity).</text>
</comment>
<comment type="catalytic activity">
    <reaction>
        <text>N-acetyl-D-muramate 6-phosphate + H2O = N-acetyl-D-glucosamine 6-phosphate + (R)-lactate</text>
        <dbReference type="Rhea" id="RHEA:26410"/>
        <dbReference type="ChEBI" id="CHEBI:15377"/>
        <dbReference type="ChEBI" id="CHEBI:16004"/>
        <dbReference type="ChEBI" id="CHEBI:57513"/>
        <dbReference type="ChEBI" id="CHEBI:58722"/>
        <dbReference type="EC" id="4.2.1.126"/>
    </reaction>
</comment>
<comment type="pathway">
    <text>Amino-sugar metabolism; 1,6-anhydro-N-acetylmuramate degradation.</text>
</comment>
<comment type="pathway">
    <text>Amino-sugar metabolism; N-acetylmuramate degradation.</text>
</comment>
<comment type="pathway">
    <text>Cell wall biogenesis; peptidoglycan recycling.</text>
</comment>
<comment type="subunit">
    <text evidence="1">Homodimer.</text>
</comment>
<comment type="miscellaneous">
    <text evidence="1">A lyase-type mechanism (elimination/hydration) is suggested for the cleavage of the lactyl ether bond of MurNAc 6-phosphate, with the formation of an alpha,beta-unsaturated aldehyde intermediate with (E)-stereochemistry, followed by the syn addition of water to give product.</text>
</comment>
<comment type="similarity">
    <text evidence="2">Belongs to the GCKR-like family. MurNAc-6-P etherase subfamily.</text>
</comment>
<reference key="1">
    <citation type="journal article" date="1995" name="Science">
        <title>Whole-genome random sequencing and assembly of Haemophilus influenzae Rd.</title>
        <authorList>
            <person name="Fleischmann R.D."/>
            <person name="Adams M.D."/>
            <person name="White O."/>
            <person name="Clayton R.A."/>
            <person name="Kirkness E.F."/>
            <person name="Kerlavage A.R."/>
            <person name="Bult C.J."/>
            <person name="Tomb J.-F."/>
            <person name="Dougherty B.A."/>
            <person name="Merrick J.M."/>
            <person name="McKenney K."/>
            <person name="Sutton G.G."/>
            <person name="FitzHugh W."/>
            <person name="Fields C.A."/>
            <person name="Gocayne J.D."/>
            <person name="Scott J.D."/>
            <person name="Shirley R."/>
            <person name="Liu L.-I."/>
            <person name="Glodek A."/>
            <person name="Kelley J.M."/>
            <person name="Weidman J.F."/>
            <person name="Phillips C.A."/>
            <person name="Spriggs T."/>
            <person name="Hedblom E."/>
            <person name="Cotton M.D."/>
            <person name="Utterback T.R."/>
            <person name="Hanna M.C."/>
            <person name="Nguyen D.T."/>
            <person name="Saudek D.M."/>
            <person name="Brandon R.C."/>
            <person name="Fine L.D."/>
            <person name="Fritchman J.L."/>
            <person name="Fuhrmann J.L."/>
            <person name="Geoghagen N.S.M."/>
            <person name="Gnehm C.L."/>
            <person name="McDonald L.A."/>
            <person name="Small K.V."/>
            <person name="Fraser C.M."/>
            <person name="Smith H.O."/>
            <person name="Venter J.C."/>
        </authorList>
    </citation>
    <scope>NUCLEOTIDE SEQUENCE [LARGE SCALE GENOMIC DNA]</scope>
    <source>
        <strain>ATCC 51907 / DSM 11121 / KW20 / Rd</strain>
    </source>
</reference>
<reference key="2">
    <citation type="submission" date="2005-01" db="PDB data bank">
        <title>Crystal structure of hypothetical protein HI0754 from Haemophilus influenzae.</title>
        <authorList>
            <consortium name="Midwest center for structural genomics (MCSG)"/>
        </authorList>
    </citation>
    <scope>X-RAY CRYSTALLOGRAPHY (1.9 ANGSTROMS)</scope>
</reference>
<dbReference type="EC" id="4.2.1.126"/>
<dbReference type="EMBL" id="L42023">
    <property type="protein sequence ID" value="AAC22413.1"/>
    <property type="molecule type" value="Genomic_DNA"/>
</dbReference>
<dbReference type="PIR" id="I64090">
    <property type="entry name" value="I64090"/>
</dbReference>
<dbReference type="RefSeq" id="NP_438913.1">
    <property type="nucleotide sequence ID" value="NC_000907.1"/>
</dbReference>
<dbReference type="PDB" id="1NRI">
    <property type="method" value="X-ray"/>
    <property type="resolution" value="1.90 A"/>
    <property type="chains" value="A=1-303"/>
</dbReference>
<dbReference type="PDB" id="4LZJ">
    <property type="method" value="X-ray"/>
    <property type="resolution" value="2.40 A"/>
    <property type="chains" value="A/B/C/D=1-303"/>
</dbReference>
<dbReference type="PDB" id="4M0D">
    <property type="method" value="X-ray"/>
    <property type="resolution" value="2.58 A"/>
    <property type="chains" value="A/B/C/D=1-303"/>
</dbReference>
<dbReference type="PDBsum" id="1NRI"/>
<dbReference type="PDBsum" id="4LZJ"/>
<dbReference type="PDBsum" id="4M0D"/>
<dbReference type="SMR" id="P44862"/>
<dbReference type="STRING" id="71421.HI_0754"/>
<dbReference type="EnsemblBacteria" id="AAC22413">
    <property type="protein sequence ID" value="AAC22413"/>
    <property type="gene ID" value="HI_0754"/>
</dbReference>
<dbReference type="KEGG" id="hin:HI_0754"/>
<dbReference type="PATRIC" id="fig|71421.8.peg.792"/>
<dbReference type="eggNOG" id="COG2103">
    <property type="taxonomic scope" value="Bacteria"/>
</dbReference>
<dbReference type="HOGENOM" id="CLU_049049_1_1_6"/>
<dbReference type="OrthoDB" id="9813395at2"/>
<dbReference type="PhylomeDB" id="P44862"/>
<dbReference type="BioCyc" id="HINF71421:G1GJ1-792-MONOMER"/>
<dbReference type="BRENDA" id="4.2.1.126">
    <property type="organism ID" value="2529"/>
</dbReference>
<dbReference type="UniPathway" id="UPA00342"/>
<dbReference type="UniPathway" id="UPA00343"/>
<dbReference type="UniPathway" id="UPA00544"/>
<dbReference type="EvolutionaryTrace" id="P44862"/>
<dbReference type="Proteomes" id="UP000000579">
    <property type="component" value="Chromosome"/>
</dbReference>
<dbReference type="GO" id="GO:0097367">
    <property type="term" value="F:carbohydrate derivative binding"/>
    <property type="evidence" value="ECO:0007669"/>
    <property type="project" value="InterPro"/>
</dbReference>
<dbReference type="GO" id="GO:0016835">
    <property type="term" value="F:carbon-oxygen lyase activity"/>
    <property type="evidence" value="ECO:0000318"/>
    <property type="project" value="GO_Central"/>
</dbReference>
<dbReference type="GO" id="GO:0016803">
    <property type="term" value="F:ether hydrolase activity"/>
    <property type="evidence" value="ECO:0000318"/>
    <property type="project" value="GO_Central"/>
</dbReference>
<dbReference type="GO" id="GO:0097175">
    <property type="term" value="P:1,6-anhydro-N-acetyl-beta-muramic acid catabolic process"/>
    <property type="evidence" value="ECO:0007669"/>
    <property type="project" value="UniProtKB-UniRule"/>
</dbReference>
<dbReference type="GO" id="GO:0046348">
    <property type="term" value="P:amino sugar catabolic process"/>
    <property type="evidence" value="ECO:0000318"/>
    <property type="project" value="GO_Central"/>
</dbReference>
<dbReference type="GO" id="GO:0097173">
    <property type="term" value="P:N-acetylmuramic acid catabolic process"/>
    <property type="evidence" value="ECO:0007669"/>
    <property type="project" value="UniProtKB-UniPathway"/>
</dbReference>
<dbReference type="GO" id="GO:0009254">
    <property type="term" value="P:peptidoglycan turnover"/>
    <property type="evidence" value="ECO:0000318"/>
    <property type="project" value="GO_Central"/>
</dbReference>
<dbReference type="CDD" id="cd05007">
    <property type="entry name" value="SIS_Etherase"/>
    <property type="match status" value="1"/>
</dbReference>
<dbReference type="FunFam" id="1.10.8.1080:FF:000001">
    <property type="entry name" value="N-acetylmuramic acid 6-phosphate etherase"/>
    <property type="match status" value="1"/>
</dbReference>
<dbReference type="FunFam" id="3.40.50.10490:FF:000014">
    <property type="entry name" value="N-acetylmuramic acid 6-phosphate etherase"/>
    <property type="match status" value="1"/>
</dbReference>
<dbReference type="Gene3D" id="1.10.8.1080">
    <property type="match status" value="1"/>
</dbReference>
<dbReference type="Gene3D" id="3.40.50.10490">
    <property type="entry name" value="Glucose-6-phosphate isomerase like protein, domain 1"/>
    <property type="match status" value="1"/>
</dbReference>
<dbReference type="HAMAP" id="MF_00068">
    <property type="entry name" value="MurQ"/>
    <property type="match status" value="1"/>
</dbReference>
<dbReference type="InterPro" id="IPR005488">
    <property type="entry name" value="Etherase_MurQ"/>
</dbReference>
<dbReference type="InterPro" id="IPR005486">
    <property type="entry name" value="Glucokinase_regulatory_CS"/>
</dbReference>
<dbReference type="InterPro" id="IPR040190">
    <property type="entry name" value="MURQ/GCKR"/>
</dbReference>
<dbReference type="InterPro" id="IPR001347">
    <property type="entry name" value="SIS_dom"/>
</dbReference>
<dbReference type="InterPro" id="IPR046348">
    <property type="entry name" value="SIS_dom_sf"/>
</dbReference>
<dbReference type="NCBIfam" id="TIGR00274">
    <property type="entry name" value="N-acetylmuramic acid 6-phosphate etherase"/>
    <property type="match status" value="1"/>
</dbReference>
<dbReference type="NCBIfam" id="NF003915">
    <property type="entry name" value="PRK05441.1"/>
    <property type="match status" value="1"/>
</dbReference>
<dbReference type="NCBIfam" id="NF009222">
    <property type="entry name" value="PRK12570.1"/>
    <property type="match status" value="1"/>
</dbReference>
<dbReference type="PANTHER" id="PTHR10088">
    <property type="entry name" value="GLUCOKINASE REGULATORY PROTEIN"/>
    <property type="match status" value="1"/>
</dbReference>
<dbReference type="PANTHER" id="PTHR10088:SF4">
    <property type="entry name" value="GLUCOKINASE REGULATORY PROTEIN"/>
    <property type="match status" value="1"/>
</dbReference>
<dbReference type="Pfam" id="PF20741">
    <property type="entry name" value="GKRP-like_C"/>
    <property type="match status" value="1"/>
</dbReference>
<dbReference type="Pfam" id="PF22645">
    <property type="entry name" value="GKRP_SIS_N"/>
    <property type="match status" value="1"/>
</dbReference>
<dbReference type="SUPFAM" id="SSF53697">
    <property type="entry name" value="SIS domain"/>
    <property type="match status" value="1"/>
</dbReference>
<dbReference type="PROSITE" id="PS01272">
    <property type="entry name" value="GCKR"/>
    <property type="match status" value="1"/>
</dbReference>
<dbReference type="PROSITE" id="PS51464">
    <property type="entry name" value="SIS"/>
    <property type="match status" value="1"/>
</dbReference>
<keyword id="KW-0002">3D-structure</keyword>
<keyword id="KW-0119">Carbohydrate metabolism</keyword>
<keyword id="KW-0456">Lyase</keyword>
<keyword id="KW-1185">Reference proteome</keyword>
<protein>
    <recommendedName>
        <fullName>N-acetylmuramic acid 6-phosphate etherase</fullName>
        <shortName>MurNAc-6-P etherase</shortName>
        <ecNumber>4.2.1.126</ecNumber>
    </recommendedName>
    <alternativeName>
        <fullName>N-acetylmuramic acid 6-phosphate hydrolase</fullName>
    </alternativeName>
    <alternativeName>
        <fullName>N-acetylmuramic acid 6-phosphate lyase</fullName>
    </alternativeName>
</protein>
<organism>
    <name type="scientific">Haemophilus influenzae (strain ATCC 51907 / DSM 11121 / KW20 / Rd)</name>
    <dbReference type="NCBI Taxonomy" id="71421"/>
    <lineage>
        <taxon>Bacteria</taxon>
        <taxon>Pseudomonadati</taxon>
        <taxon>Pseudomonadota</taxon>
        <taxon>Gammaproteobacteria</taxon>
        <taxon>Pasteurellales</taxon>
        <taxon>Pasteurellaceae</taxon>
        <taxon>Haemophilus</taxon>
    </lineage>
</organism>
<accession>P44862</accession>
<evidence type="ECO:0000250" key="1"/>
<evidence type="ECO:0000305" key="2"/>
<evidence type="ECO:0007829" key="3">
    <source>
        <dbReference type="PDB" id="1NRI"/>
    </source>
</evidence>
<evidence type="ECO:0007829" key="4">
    <source>
        <dbReference type="PDB" id="4LZJ"/>
    </source>
</evidence>
<feature type="chain" id="PRO_0000214836" description="N-acetylmuramic acid 6-phosphate etherase">
    <location>
        <begin position="1"/>
        <end position="303"/>
    </location>
</feature>
<feature type="domain" description="SIS">
    <location>
        <begin position="61"/>
        <end position="224"/>
    </location>
</feature>
<feature type="active site" description="Proton donor" evidence="1">
    <location>
        <position position="89"/>
    </location>
</feature>
<feature type="active site" evidence="1">
    <location>
        <position position="120"/>
    </location>
</feature>
<feature type="helix" evidence="4">
    <location>
        <begin position="4"/>
        <end position="10"/>
    </location>
</feature>
<feature type="helix" evidence="3">
    <location>
        <begin position="13"/>
        <end position="15"/>
    </location>
</feature>
<feature type="helix" evidence="3">
    <location>
        <begin position="19"/>
        <end position="21"/>
    </location>
</feature>
<feature type="helix" evidence="3">
    <location>
        <begin position="24"/>
        <end position="26"/>
    </location>
</feature>
<feature type="helix" evidence="3">
    <location>
        <begin position="29"/>
        <end position="40"/>
    </location>
</feature>
<feature type="helix" evidence="3">
    <location>
        <begin position="42"/>
        <end position="66"/>
    </location>
</feature>
<feature type="strand" evidence="3">
    <location>
        <begin position="71"/>
        <end position="76"/>
    </location>
</feature>
<feature type="helix" evidence="3">
    <location>
        <begin position="77"/>
        <end position="94"/>
    </location>
</feature>
<feature type="strand" evidence="3">
    <location>
        <begin position="100"/>
        <end position="105"/>
    </location>
</feature>
<feature type="helix" evidence="3">
    <location>
        <begin position="109"/>
        <end position="112"/>
    </location>
</feature>
<feature type="helix" evidence="3">
    <location>
        <begin position="119"/>
        <end position="121"/>
    </location>
</feature>
<feature type="helix" evidence="3">
    <location>
        <begin position="125"/>
        <end position="132"/>
    </location>
</feature>
<feature type="strand" evidence="3">
    <location>
        <begin position="139"/>
        <end position="144"/>
    </location>
</feature>
<feature type="helix" evidence="3">
    <location>
        <begin position="151"/>
        <end position="163"/>
    </location>
</feature>
<feature type="strand" evidence="3">
    <location>
        <begin position="166"/>
        <end position="173"/>
    </location>
</feature>
<feature type="helix" evidence="3">
    <location>
        <begin position="177"/>
        <end position="181"/>
    </location>
</feature>
<feature type="strand" evidence="3">
    <location>
        <begin position="182"/>
        <end position="187"/>
    </location>
</feature>
<feature type="turn" evidence="3">
    <location>
        <begin position="199"/>
        <end position="201"/>
    </location>
</feature>
<feature type="helix" evidence="3">
    <location>
        <begin position="202"/>
        <end position="221"/>
    </location>
</feature>
<feature type="strand" evidence="4">
    <location>
        <begin position="224"/>
        <end position="226"/>
    </location>
</feature>
<feature type="helix" evidence="3">
    <location>
        <begin position="238"/>
        <end position="251"/>
    </location>
</feature>
<feature type="helix" evidence="4">
    <location>
        <begin position="256"/>
        <end position="265"/>
    </location>
</feature>
<feature type="turn" evidence="4">
    <location>
        <begin position="266"/>
        <end position="268"/>
    </location>
</feature>
<feature type="helix" evidence="4">
    <location>
        <begin position="270"/>
        <end position="279"/>
    </location>
</feature>
<feature type="helix" evidence="4">
    <location>
        <begin position="283"/>
        <end position="292"/>
    </location>
</feature>
<feature type="turn" evidence="4">
    <location>
        <begin position="293"/>
        <end position="295"/>
    </location>
</feature>
<feature type="helix" evidence="4">
    <location>
        <begin position="297"/>
        <end position="302"/>
    </location>
</feature>
<proteinExistence type="evidence at protein level"/>
<sequence>MNDIILKSLSTLITEQRNPNSVDIDRQSTLEIVRLMNEEDKLVPLAIESCLPQISLAVEQIVQAFQQGGRLIYIGAGTSGRLGVLDASECPPTFGVSTEMVKGIIAGGECAIRHPVEGAEDNTKAVLNDLQSIHFSKNDVLVGIAASGRTPYVIAGLQYAKSLGALTISIASNPKSEMAEIADIAIETIVGPEILTGSSRLKSGTAQKMVLNMLTTASMILLGKCYENLMVDVQASNEKLKARAVRIVMQATDCNKTLAEQTLLEADQNAKLAIMMILSTLSKSEAKVLLERHQGKLRNALSK</sequence>
<gene>
    <name type="primary">murQ</name>
    <name type="ordered locus">HI_0754</name>
</gene>